<accession>C6DKE7</accession>
<evidence type="ECO:0000255" key="1">
    <source>
        <dbReference type="HAMAP-Rule" id="MF_00675"/>
    </source>
</evidence>
<proteinExistence type="inferred from homology"/>
<feature type="chain" id="PRO_1000212519" description="Uronate isomerase">
    <location>
        <begin position="1"/>
        <end position="469"/>
    </location>
</feature>
<dbReference type="EC" id="5.3.1.12" evidence="1"/>
<dbReference type="EMBL" id="CP001657">
    <property type="protein sequence ID" value="ACT11584.1"/>
    <property type="molecule type" value="Genomic_DNA"/>
</dbReference>
<dbReference type="RefSeq" id="WP_012773236.1">
    <property type="nucleotide sequence ID" value="NC_012917.1"/>
</dbReference>
<dbReference type="SMR" id="C6DKE7"/>
<dbReference type="STRING" id="561230.PC1_0529"/>
<dbReference type="GeneID" id="67795636"/>
<dbReference type="KEGG" id="pct:PC1_0529"/>
<dbReference type="eggNOG" id="COG1904">
    <property type="taxonomic scope" value="Bacteria"/>
</dbReference>
<dbReference type="HOGENOM" id="CLU_044465_1_0_6"/>
<dbReference type="OrthoDB" id="9766564at2"/>
<dbReference type="UniPathway" id="UPA00246"/>
<dbReference type="Proteomes" id="UP000002736">
    <property type="component" value="Chromosome"/>
</dbReference>
<dbReference type="GO" id="GO:0008880">
    <property type="term" value="F:glucuronate isomerase activity"/>
    <property type="evidence" value="ECO:0007669"/>
    <property type="project" value="UniProtKB-UniRule"/>
</dbReference>
<dbReference type="GO" id="GO:0019698">
    <property type="term" value="P:D-galacturonate catabolic process"/>
    <property type="evidence" value="ECO:0007669"/>
    <property type="project" value="TreeGrafter"/>
</dbReference>
<dbReference type="GO" id="GO:0042840">
    <property type="term" value="P:D-glucuronate catabolic process"/>
    <property type="evidence" value="ECO:0007669"/>
    <property type="project" value="TreeGrafter"/>
</dbReference>
<dbReference type="Gene3D" id="3.20.20.140">
    <property type="entry name" value="Metal-dependent hydrolases"/>
    <property type="match status" value="1"/>
</dbReference>
<dbReference type="Gene3D" id="1.10.2020.10">
    <property type="entry name" value="uronate isomerase, domain 2, chain A"/>
    <property type="match status" value="1"/>
</dbReference>
<dbReference type="HAMAP" id="MF_00675">
    <property type="entry name" value="UxaC"/>
    <property type="match status" value="1"/>
</dbReference>
<dbReference type="InterPro" id="IPR032466">
    <property type="entry name" value="Metal_Hydrolase"/>
</dbReference>
<dbReference type="InterPro" id="IPR003766">
    <property type="entry name" value="Uronate_isomerase"/>
</dbReference>
<dbReference type="NCBIfam" id="NF002794">
    <property type="entry name" value="PRK02925.1"/>
    <property type="match status" value="1"/>
</dbReference>
<dbReference type="PANTHER" id="PTHR30068">
    <property type="entry name" value="URONATE ISOMERASE"/>
    <property type="match status" value="1"/>
</dbReference>
<dbReference type="PANTHER" id="PTHR30068:SF4">
    <property type="entry name" value="URONATE ISOMERASE"/>
    <property type="match status" value="1"/>
</dbReference>
<dbReference type="Pfam" id="PF02614">
    <property type="entry name" value="UxaC"/>
    <property type="match status" value="1"/>
</dbReference>
<dbReference type="SUPFAM" id="SSF51556">
    <property type="entry name" value="Metallo-dependent hydrolases"/>
    <property type="match status" value="1"/>
</dbReference>
<organism>
    <name type="scientific">Pectobacterium carotovorum subsp. carotovorum (strain PC1)</name>
    <dbReference type="NCBI Taxonomy" id="561230"/>
    <lineage>
        <taxon>Bacteria</taxon>
        <taxon>Pseudomonadati</taxon>
        <taxon>Pseudomonadota</taxon>
        <taxon>Gammaproteobacteria</taxon>
        <taxon>Enterobacterales</taxon>
        <taxon>Pectobacteriaceae</taxon>
        <taxon>Pectobacterium</taxon>
    </lineage>
</organism>
<sequence>MPQFLSEDFLLDSEFARRLYHEYAVDQPIFDYHCHLPPEQIAENYRFKNLYDIWLKGDHYKWRAMRTNGVPERLCTGDASDWEKFEAWAATVPHTIGNPLYHWTHLELRRPFGVTGTLLSPSTAKDIWDRCNAMLERDDFTARGIMQQMNVKMVGTTDDPIDDLRHHKTVAQDSSFSIKVLPSWRPDKAFNIELATFNDYMAKLGEVSDTDIRRFSDLQAALTKRLDHFAAHGCKVSDHALDVVMFAEADDATLDSILARRLSGETLSEHEVAQFKTGVLVWLGAEYARRGWVQQYHIGALRNNNLRQFKLLGPDVGFDSINDRPLAQELSRLLSKQNEENLLPKTILYCLNPRDNEVLGTMIGNFQGEGMPGKMQFGSGWWFNDQKDGMQRQMTQLAQLGLLSRFVGMLTDSRSFLSYTRHEYFRRILCQMIGRWVEDGEAPADLPLLGEMVKNISFDNAKNYFAIEL</sequence>
<reference key="1">
    <citation type="submission" date="2009-07" db="EMBL/GenBank/DDBJ databases">
        <title>Complete sequence of Pectobacterium carotovorum subsp. carotovorum PC1.</title>
        <authorList>
            <consortium name="US DOE Joint Genome Institute"/>
            <person name="Lucas S."/>
            <person name="Copeland A."/>
            <person name="Lapidus A."/>
            <person name="Glavina del Rio T."/>
            <person name="Tice H."/>
            <person name="Bruce D."/>
            <person name="Goodwin L."/>
            <person name="Pitluck S."/>
            <person name="Munk A.C."/>
            <person name="Brettin T."/>
            <person name="Detter J.C."/>
            <person name="Han C."/>
            <person name="Tapia R."/>
            <person name="Larimer F."/>
            <person name="Land M."/>
            <person name="Hauser L."/>
            <person name="Kyrpides N."/>
            <person name="Mikhailova N."/>
            <person name="Balakrishnan V."/>
            <person name="Glasner J."/>
            <person name="Perna N.T."/>
        </authorList>
    </citation>
    <scope>NUCLEOTIDE SEQUENCE [LARGE SCALE GENOMIC DNA]</scope>
    <source>
        <strain>PC1</strain>
    </source>
</reference>
<protein>
    <recommendedName>
        <fullName evidence="1">Uronate isomerase</fullName>
        <ecNumber evidence="1">5.3.1.12</ecNumber>
    </recommendedName>
    <alternativeName>
        <fullName evidence="1">Glucuronate isomerase</fullName>
    </alternativeName>
    <alternativeName>
        <fullName evidence="1">Uronic isomerase</fullName>
    </alternativeName>
</protein>
<keyword id="KW-0413">Isomerase</keyword>
<name>UXAC_PECCP</name>
<comment type="catalytic activity">
    <reaction evidence="1">
        <text>D-glucuronate = D-fructuronate</text>
        <dbReference type="Rhea" id="RHEA:13049"/>
        <dbReference type="ChEBI" id="CHEBI:58720"/>
        <dbReference type="ChEBI" id="CHEBI:59863"/>
        <dbReference type="EC" id="5.3.1.12"/>
    </reaction>
</comment>
<comment type="catalytic activity">
    <reaction evidence="1">
        <text>aldehydo-D-galacturonate = keto-D-tagaturonate</text>
        <dbReference type="Rhea" id="RHEA:27702"/>
        <dbReference type="ChEBI" id="CHEBI:12952"/>
        <dbReference type="ChEBI" id="CHEBI:17886"/>
        <dbReference type="EC" id="5.3.1.12"/>
    </reaction>
</comment>
<comment type="pathway">
    <text evidence="1">Carbohydrate metabolism; pentose and glucuronate interconversion.</text>
</comment>
<comment type="similarity">
    <text evidence="1">Belongs to the metallo-dependent hydrolases superfamily. Uronate isomerase family.</text>
</comment>
<gene>
    <name evidence="1" type="primary">uxaC</name>
    <name type="ordered locus">PC1_0529</name>
</gene>